<name>RS19_PHEZH</name>
<organism>
    <name type="scientific">Phenylobacterium zucineum (strain HLK1)</name>
    <dbReference type="NCBI Taxonomy" id="450851"/>
    <lineage>
        <taxon>Bacteria</taxon>
        <taxon>Pseudomonadati</taxon>
        <taxon>Pseudomonadota</taxon>
        <taxon>Alphaproteobacteria</taxon>
        <taxon>Caulobacterales</taxon>
        <taxon>Caulobacteraceae</taxon>
        <taxon>Phenylobacterium</taxon>
    </lineage>
</organism>
<gene>
    <name evidence="1" type="primary">rpsS</name>
    <name type="ordered locus">PHZ_c1234</name>
</gene>
<dbReference type="EMBL" id="CP000747">
    <property type="protein sequence ID" value="ACG77648.1"/>
    <property type="molecule type" value="Genomic_DNA"/>
</dbReference>
<dbReference type="RefSeq" id="WP_012521792.1">
    <property type="nucleotide sequence ID" value="NC_011144.1"/>
</dbReference>
<dbReference type="SMR" id="B4R8M1"/>
<dbReference type="STRING" id="450851.PHZ_c1234"/>
<dbReference type="KEGG" id="pzu:PHZ_c1234"/>
<dbReference type="eggNOG" id="COG0185">
    <property type="taxonomic scope" value="Bacteria"/>
</dbReference>
<dbReference type="HOGENOM" id="CLU_144911_0_1_5"/>
<dbReference type="OrthoDB" id="9797833at2"/>
<dbReference type="Proteomes" id="UP000001868">
    <property type="component" value="Chromosome"/>
</dbReference>
<dbReference type="GO" id="GO:0005737">
    <property type="term" value="C:cytoplasm"/>
    <property type="evidence" value="ECO:0007669"/>
    <property type="project" value="UniProtKB-ARBA"/>
</dbReference>
<dbReference type="GO" id="GO:0015935">
    <property type="term" value="C:small ribosomal subunit"/>
    <property type="evidence" value="ECO:0007669"/>
    <property type="project" value="InterPro"/>
</dbReference>
<dbReference type="GO" id="GO:0019843">
    <property type="term" value="F:rRNA binding"/>
    <property type="evidence" value="ECO:0007669"/>
    <property type="project" value="UniProtKB-UniRule"/>
</dbReference>
<dbReference type="GO" id="GO:0003735">
    <property type="term" value="F:structural constituent of ribosome"/>
    <property type="evidence" value="ECO:0007669"/>
    <property type="project" value="InterPro"/>
</dbReference>
<dbReference type="GO" id="GO:0000028">
    <property type="term" value="P:ribosomal small subunit assembly"/>
    <property type="evidence" value="ECO:0007669"/>
    <property type="project" value="TreeGrafter"/>
</dbReference>
<dbReference type="GO" id="GO:0006412">
    <property type="term" value="P:translation"/>
    <property type="evidence" value="ECO:0007669"/>
    <property type="project" value="UniProtKB-UniRule"/>
</dbReference>
<dbReference type="FunFam" id="3.30.860.10:FF:000001">
    <property type="entry name" value="30S ribosomal protein S19"/>
    <property type="match status" value="1"/>
</dbReference>
<dbReference type="Gene3D" id="3.30.860.10">
    <property type="entry name" value="30s Ribosomal Protein S19, Chain A"/>
    <property type="match status" value="1"/>
</dbReference>
<dbReference type="HAMAP" id="MF_00531">
    <property type="entry name" value="Ribosomal_uS19"/>
    <property type="match status" value="1"/>
</dbReference>
<dbReference type="InterPro" id="IPR002222">
    <property type="entry name" value="Ribosomal_uS19"/>
</dbReference>
<dbReference type="InterPro" id="IPR005732">
    <property type="entry name" value="Ribosomal_uS19_bac-type"/>
</dbReference>
<dbReference type="InterPro" id="IPR020934">
    <property type="entry name" value="Ribosomal_uS19_CS"/>
</dbReference>
<dbReference type="InterPro" id="IPR023575">
    <property type="entry name" value="Ribosomal_uS19_SF"/>
</dbReference>
<dbReference type="NCBIfam" id="TIGR01050">
    <property type="entry name" value="rpsS_bact"/>
    <property type="match status" value="1"/>
</dbReference>
<dbReference type="PANTHER" id="PTHR11880">
    <property type="entry name" value="RIBOSOMAL PROTEIN S19P FAMILY MEMBER"/>
    <property type="match status" value="1"/>
</dbReference>
<dbReference type="PANTHER" id="PTHR11880:SF8">
    <property type="entry name" value="SMALL RIBOSOMAL SUBUNIT PROTEIN US19M"/>
    <property type="match status" value="1"/>
</dbReference>
<dbReference type="Pfam" id="PF00203">
    <property type="entry name" value="Ribosomal_S19"/>
    <property type="match status" value="1"/>
</dbReference>
<dbReference type="PIRSF" id="PIRSF002144">
    <property type="entry name" value="Ribosomal_S19"/>
    <property type="match status" value="1"/>
</dbReference>
<dbReference type="PRINTS" id="PR00975">
    <property type="entry name" value="RIBOSOMALS19"/>
</dbReference>
<dbReference type="SUPFAM" id="SSF54570">
    <property type="entry name" value="Ribosomal protein S19"/>
    <property type="match status" value="1"/>
</dbReference>
<dbReference type="PROSITE" id="PS00323">
    <property type="entry name" value="RIBOSOMAL_S19"/>
    <property type="match status" value="1"/>
</dbReference>
<protein>
    <recommendedName>
        <fullName evidence="1">Small ribosomal subunit protein uS19</fullName>
    </recommendedName>
    <alternativeName>
        <fullName evidence="2">30S ribosomal protein S19</fullName>
    </alternativeName>
</protein>
<reference key="1">
    <citation type="journal article" date="2008" name="BMC Genomics">
        <title>Complete genome of Phenylobacterium zucineum - a novel facultative intracellular bacterium isolated from human erythroleukemia cell line K562.</title>
        <authorList>
            <person name="Luo Y."/>
            <person name="Xu X."/>
            <person name="Ding Z."/>
            <person name="Liu Z."/>
            <person name="Zhang B."/>
            <person name="Yan Z."/>
            <person name="Sun J."/>
            <person name="Hu S."/>
            <person name="Hu X."/>
        </authorList>
    </citation>
    <scope>NUCLEOTIDE SEQUENCE [LARGE SCALE GENOMIC DNA]</scope>
    <source>
        <strain>HLK1</strain>
    </source>
</reference>
<keyword id="KW-1185">Reference proteome</keyword>
<keyword id="KW-0687">Ribonucleoprotein</keyword>
<keyword id="KW-0689">Ribosomal protein</keyword>
<keyword id="KW-0694">RNA-binding</keyword>
<keyword id="KW-0699">rRNA-binding</keyword>
<comment type="function">
    <text evidence="1">Protein S19 forms a complex with S13 that binds strongly to the 16S ribosomal RNA.</text>
</comment>
<comment type="similarity">
    <text evidence="1">Belongs to the universal ribosomal protein uS19 family.</text>
</comment>
<accession>B4R8M1</accession>
<sequence>MTRSVWKGPFVDGYLLKKAEAAQSSGRKDVIKTWSRRSTIMPQFVGLTFGVHNGHKHVPVLISEDMVGMKLGEFAPTRFFPGHAADKKAKRK</sequence>
<feature type="chain" id="PRO_1000128014" description="Small ribosomal subunit protein uS19">
    <location>
        <begin position="1"/>
        <end position="92"/>
    </location>
</feature>
<proteinExistence type="inferred from homology"/>
<evidence type="ECO:0000255" key="1">
    <source>
        <dbReference type="HAMAP-Rule" id="MF_00531"/>
    </source>
</evidence>
<evidence type="ECO:0000305" key="2"/>